<reference key="1">
    <citation type="journal article" date="2002" name="Mol. Cell. Probes">
        <title>Genetic variability among flavescence doree phytoplasmas from different origins in Italy and France.</title>
        <authorList>
            <person name="Martini M."/>
            <person name="Botti S."/>
            <person name="Marcone C."/>
            <person name="Marzachi C."/>
            <person name="Casati P."/>
            <person name="Bianco P.A."/>
            <person name="Benedetti R."/>
            <person name="Bertaccini A."/>
        </authorList>
    </citation>
    <scope>NUCLEOTIDE SEQUENCE [GENOMIC DNA]</scope>
</reference>
<feature type="chain" id="PRO_0000130058" description="Small ribosomal subunit protein uS3">
    <location>
        <begin position="1"/>
        <end position="250"/>
    </location>
</feature>
<feature type="domain" description="KH type-2" evidence="1">
    <location>
        <begin position="39"/>
        <end position="111"/>
    </location>
</feature>
<gene>
    <name evidence="1" type="primary">rpsC</name>
    <name evidence="1" type="synonym">rps3</name>
</gene>
<accession>Q8VS63</accession>
<comment type="function">
    <text evidence="1">Binds the lower part of the 30S subunit head. Binds mRNA in the 70S ribosome, positioning it for translation.</text>
</comment>
<comment type="subunit">
    <text evidence="1">Part of the 30S ribosomal subunit. Forms a tight complex with proteins S10 and S14.</text>
</comment>
<comment type="similarity">
    <text evidence="1">Belongs to the universal ribosomal protein uS3 family.</text>
</comment>
<sequence>MGQKSNPNGLRLGIIRTWESKWYDVDKKVPFLVGEDFKIRTLIKNNYPKSTISQIEIKRLKKSNDEFIEIDLYTSKIGIIQGPENKNKNSLINKIEKLINKKVQINIFEVKAINKIAVLVAQNIAIQLQQRAFYKAVLKSAIQKALKSGIKGIKIIITGRLGGAEKARRDSISMGVVPLNTLRADIDYAFEEAHTTYGVLGVKVIINHGEVLPNKTIADTRQIFSSQYENKKNNNKRHFVDKKNFKKSTS</sequence>
<name>RS3_ALDYE</name>
<proteinExistence type="inferred from homology"/>
<dbReference type="EMBL" id="AF396936">
    <property type="protein sequence ID" value="AAL57324.1"/>
    <property type="molecule type" value="Genomic_DNA"/>
</dbReference>
<dbReference type="SMR" id="Q8VS63"/>
<dbReference type="GO" id="GO:0022627">
    <property type="term" value="C:cytosolic small ribosomal subunit"/>
    <property type="evidence" value="ECO:0007669"/>
    <property type="project" value="TreeGrafter"/>
</dbReference>
<dbReference type="GO" id="GO:0003729">
    <property type="term" value="F:mRNA binding"/>
    <property type="evidence" value="ECO:0007669"/>
    <property type="project" value="UniProtKB-UniRule"/>
</dbReference>
<dbReference type="GO" id="GO:0019843">
    <property type="term" value="F:rRNA binding"/>
    <property type="evidence" value="ECO:0007669"/>
    <property type="project" value="UniProtKB-UniRule"/>
</dbReference>
<dbReference type="GO" id="GO:0003735">
    <property type="term" value="F:structural constituent of ribosome"/>
    <property type="evidence" value="ECO:0007669"/>
    <property type="project" value="InterPro"/>
</dbReference>
<dbReference type="GO" id="GO:0006412">
    <property type="term" value="P:translation"/>
    <property type="evidence" value="ECO:0007669"/>
    <property type="project" value="UniProtKB-UniRule"/>
</dbReference>
<dbReference type="CDD" id="cd02412">
    <property type="entry name" value="KH-II_30S_S3"/>
    <property type="match status" value="1"/>
</dbReference>
<dbReference type="Gene3D" id="3.30.300.20">
    <property type="match status" value="1"/>
</dbReference>
<dbReference type="Gene3D" id="3.30.1140.32">
    <property type="entry name" value="Ribosomal protein S3, C-terminal domain"/>
    <property type="match status" value="1"/>
</dbReference>
<dbReference type="HAMAP" id="MF_01309_B">
    <property type="entry name" value="Ribosomal_uS3_B"/>
    <property type="match status" value="1"/>
</dbReference>
<dbReference type="InterPro" id="IPR015946">
    <property type="entry name" value="KH_dom-like_a/b"/>
</dbReference>
<dbReference type="InterPro" id="IPR004044">
    <property type="entry name" value="KH_dom_type_2"/>
</dbReference>
<dbReference type="InterPro" id="IPR009019">
    <property type="entry name" value="KH_sf_prok-type"/>
</dbReference>
<dbReference type="InterPro" id="IPR036419">
    <property type="entry name" value="Ribosomal_S3_C_sf"/>
</dbReference>
<dbReference type="InterPro" id="IPR005704">
    <property type="entry name" value="Ribosomal_uS3_bac-typ"/>
</dbReference>
<dbReference type="InterPro" id="IPR001351">
    <property type="entry name" value="Ribosomal_uS3_C"/>
</dbReference>
<dbReference type="InterPro" id="IPR018280">
    <property type="entry name" value="Ribosomal_uS3_CS"/>
</dbReference>
<dbReference type="NCBIfam" id="TIGR01009">
    <property type="entry name" value="rpsC_bact"/>
    <property type="match status" value="1"/>
</dbReference>
<dbReference type="PANTHER" id="PTHR11760">
    <property type="entry name" value="30S/40S RIBOSOMAL PROTEIN S3"/>
    <property type="match status" value="1"/>
</dbReference>
<dbReference type="PANTHER" id="PTHR11760:SF19">
    <property type="entry name" value="SMALL RIBOSOMAL SUBUNIT PROTEIN US3C"/>
    <property type="match status" value="1"/>
</dbReference>
<dbReference type="Pfam" id="PF00189">
    <property type="entry name" value="Ribosomal_S3_C"/>
    <property type="match status" value="1"/>
</dbReference>
<dbReference type="SUPFAM" id="SSF54814">
    <property type="entry name" value="Prokaryotic type KH domain (KH-domain type II)"/>
    <property type="match status" value="1"/>
</dbReference>
<dbReference type="SUPFAM" id="SSF54821">
    <property type="entry name" value="Ribosomal protein S3 C-terminal domain"/>
    <property type="match status" value="1"/>
</dbReference>
<dbReference type="PROSITE" id="PS50823">
    <property type="entry name" value="KH_TYPE_2"/>
    <property type="match status" value="1"/>
</dbReference>
<dbReference type="PROSITE" id="PS00548">
    <property type="entry name" value="RIBOSOMAL_S3"/>
    <property type="match status" value="1"/>
</dbReference>
<organism>
    <name type="scientific">Alder yellows phytoplasma</name>
    <dbReference type="NCBI Taxonomy" id="72989"/>
    <lineage>
        <taxon>Bacteria</taxon>
        <taxon>Bacillati</taxon>
        <taxon>Mycoplasmatota</taxon>
        <taxon>Mollicutes</taxon>
        <taxon>Acholeplasmatales</taxon>
        <taxon>Acholeplasmataceae</taxon>
        <taxon>Candidatus Phytoplasma</taxon>
        <taxon>16SrV (Elm yellows group)</taxon>
    </lineage>
</organism>
<protein>
    <recommendedName>
        <fullName evidence="1">Small ribosomal subunit protein uS3</fullName>
    </recommendedName>
    <alternativeName>
        <fullName evidence="2">30S ribosomal protein S3</fullName>
    </alternativeName>
</protein>
<keyword id="KW-0687">Ribonucleoprotein</keyword>
<keyword id="KW-0689">Ribosomal protein</keyword>
<keyword id="KW-0694">RNA-binding</keyword>
<keyword id="KW-0699">rRNA-binding</keyword>
<evidence type="ECO:0000255" key="1">
    <source>
        <dbReference type="HAMAP-Rule" id="MF_01309"/>
    </source>
</evidence>
<evidence type="ECO:0000305" key="2"/>